<name>YDEO_BACSU</name>
<dbReference type="EMBL" id="AB001488">
    <property type="protein sequence ID" value="BAA19362.1"/>
    <property type="molecule type" value="Genomic_DNA"/>
</dbReference>
<dbReference type="EMBL" id="AL009126">
    <property type="protein sequence ID" value="CAB12335.1"/>
    <property type="molecule type" value="Genomic_DNA"/>
</dbReference>
<dbReference type="PIR" id="A69779">
    <property type="entry name" value="A69779"/>
</dbReference>
<dbReference type="RefSeq" id="NP_388409.1">
    <property type="nucleotide sequence ID" value="NC_000964.3"/>
</dbReference>
<dbReference type="RefSeq" id="WP_003234217.1">
    <property type="nucleotide sequence ID" value="NZ_OZ025638.1"/>
</dbReference>
<dbReference type="SMR" id="P96672"/>
<dbReference type="FunCoup" id="P96672">
    <property type="interactions" value="41"/>
</dbReference>
<dbReference type="STRING" id="224308.BSU05280"/>
<dbReference type="PaxDb" id="224308-BSU05280"/>
<dbReference type="EnsemblBacteria" id="CAB12335">
    <property type="protein sequence ID" value="CAB12335"/>
    <property type="gene ID" value="BSU_05280"/>
</dbReference>
<dbReference type="GeneID" id="938098"/>
<dbReference type="KEGG" id="bsu:BSU05280"/>
<dbReference type="PATRIC" id="fig|224308.179.peg.563"/>
<dbReference type="eggNOG" id="COG1284">
    <property type="taxonomic scope" value="Bacteria"/>
</dbReference>
<dbReference type="InParanoid" id="P96672"/>
<dbReference type="OrthoDB" id="265478at2"/>
<dbReference type="PhylomeDB" id="P96672"/>
<dbReference type="BioCyc" id="BSUB:BSU05280-MONOMER"/>
<dbReference type="Proteomes" id="UP000001570">
    <property type="component" value="Chromosome"/>
</dbReference>
<dbReference type="GO" id="GO:0005886">
    <property type="term" value="C:plasma membrane"/>
    <property type="evidence" value="ECO:0007669"/>
    <property type="project" value="UniProtKB-SubCell"/>
</dbReference>
<dbReference type="CDD" id="cd16380">
    <property type="entry name" value="YitT_C"/>
    <property type="match status" value="1"/>
</dbReference>
<dbReference type="Gene3D" id="3.30.70.120">
    <property type="match status" value="1"/>
</dbReference>
<dbReference type="InterPro" id="IPR019264">
    <property type="entry name" value="DUF2179"/>
</dbReference>
<dbReference type="InterPro" id="IPR015867">
    <property type="entry name" value="N-reg_PII/ATP_PRibTrfase_C"/>
</dbReference>
<dbReference type="InterPro" id="IPR051461">
    <property type="entry name" value="UPF0750_membrane"/>
</dbReference>
<dbReference type="InterPro" id="IPR003740">
    <property type="entry name" value="YitT"/>
</dbReference>
<dbReference type="PANTHER" id="PTHR33545:SF2">
    <property type="entry name" value="UPF0750 MEMBRANE PROTEIN YDEO"/>
    <property type="match status" value="1"/>
</dbReference>
<dbReference type="PANTHER" id="PTHR33545">
    <property type="entry name" value="UPF0750 MEMBRANE PROTEIN YITT-RELATED"/>
    <property type="match status" value="1"/>
</dbReference>
<dbReference type="Pfam" id="PF10035">
    <property type="entry name" value="DUF2179"/>
    <property type="match status" value="1"/>
</dbReference>
<dbReference type="Pfam" id="PF02588">
    <property type="entry name" value="YitT_membrane"/>
    <property type="match status" value="1"/>
</dbReference>
<dbReference type="PIRSF" id="PIRSF006483">
    <property type="entry name" value="Membrane_protein_YitT"/>
    <property type="match status" value="1"/>
</dbReference>
<gene>
    <name type="primary">ydeO</name>
    <name type="ordered locus">BSU05280</name>
</gene>
<organism>
    <name type="scientific">Bacillus subtilis (strain 168)</name>
    <dbReference type="NCBI Taxonomy" id="224308"/>
    <lineage>
        <taxon>Bacteria</taxon>
        <taxon>Bacillati</taxon>
        <taxon>Bacillota</taxon>
        <taxon>Bacilli</taxon>
        <taxon>Bacillales</taxon>
        <taxon>Bacillaceae</taxon>
        <taxon>Bacillus</taxon>
    </lineage>
</organism>
<accession>P96672</accession>
<accession>Q797H6</accession>
<feature type="chain" id="PRO_0000383355" description="UPF0750 membrane protein YdeO">
    <location>
        <begin position="1"/>
        <end position="290"/>
    </location>
</feature>
<feature type="transmembrane region" description="Helical" evidence="1">
    <location>
        <begin position="18"/>
        <end position="38"/>
    </location>
</feature>
<feature type="transmembrane region" description="Helical" evidence="1">
    <location>
        <begin position="56"/>
        <end position="76"/>
    </location>
</feature>
<feature type="transmembrane region" description="Helical" evidence="1">
    <location>
        <begin position="83"/>
        <end position="103"/>
    </location>
</feature>
<feature type="transmembrane region" description="Helical" evidence="1">
    <location>
        <begin position="112"/>
        <end position="132"/>
    </location>
</feature>
<feature type="transmembrane region" description="Helical" evidence="1">
    <location>
        <begin position="165"/>
        <end position="185"/>
    </location>
</feature>
<evidence type="ECO:0000255" key="1"/>
<evidence type="ECO:0000305" key="2"/>
<comment type="subcellular location">
    <subcellularLocation>
        <location evidence="2">Cell membrane</location>
        <topology evidence="2">Multi-pass membrane protein</topology>
    </subcellularLocation>
</comment>
<comment type="similarity">
    <text evidence="2">Belongs to the UPF0750 family.</text>
</comment>
<sequence length="290" mass="31428">MNTPKKHKKFKAKMILQIIMVIIGGIIAAYGLETVLIPNSVSDGGVTGLSIVGSQLFNLPLGILIAVINIPFVWLGYKQIGKSFALLSIIGIVSLAAGTSFFHHTPAIIEGDTLLITVVGGIILGFGMGLALRNGGALDGIDMLAVLLSRKLPFGTSDLILFLNLFVFIFVSTVFGLQGALLSVIAYYIASKVIHVVEEGLSGSKTFQIITTQPELMVETIRDQLGRSATYKEAYGGFSHEKFKEITCVINRLEETKLKEIINDIDKTAFVTVYDVAEVKGSNFRNLNHH</sequence>
<protein>
    <recommendedName>
        <fullName>UPF0750 membrane protein YdeO</fullName>
    </recommendedName>
</protein>
<reference key="1">
    <citation type="submission" date="1997-03" db="EMBL/GenBank/DDBJ databases">
        <title>A 148 kbp sequence of the region between 35 and 47 degree of the Bacillus subtilis genome.</title>
        <authorList>
            <person name="Kasahara Y."/>
            <person name="Nakai S."/>
            <person name="Lee S."/>
            <person name="Sadaie Y."/>
            <person name="Ogasawara N."/>
        </authorList>
    </citation>
    <scope>NUCLEOTIDE SEQUENCE [GENOMIC DNA]</scope>
    <source>
        <strain>168</strain>
    </source>
</reference>
<reference key="2">
    <citation type="journal article" date="1997" name="Nature">
        <title>The complete genome sequence of the Gram-positive bacterium Bacillus subtilis.</title>
        <authorList>
            <person name="Kunst F."/>
            <person name="Ogasawara N."/>
            <person name="Moszer I."/>
            <person name="Albertini A.M."/>
            <person name="Alloni G."/>
            <person name="Azevedo V."/>
            <person name="Bertero M.G."/>
            <person name="Bessieres P."/>
            <person name="Bolotin A."/>
            <person name="Borchert S."/>
            <person name="Borriss R."/>
            <person name="Boursier L."/>
            <person name="Brans A."/>
            <person name="Braun M."/>
            <person name="Brignell S.C."/>
            <person name="Bron S."/>
            <person name="Brouillet S."/>
            <person name="Bruschi C.V."/>
            <person name="Caldwell B."/>
            <person name="Capuano V."/>
            <person name="Carter N.M."/>
            <person name="Choi S.-K."/>
            <person name="Codani J.-J."/>
            <person name="Connerton I.F."/>
            <person name="Cummings N.J."/>
            <person name="Daniel R.A."/>
            <person name="Denizot F."/>
            <person name="Devine K.M."/>
            <person name="Duesterhoeft A."/>
            <person name="Ehrlich S.D."/>
            <person name="Emmerson P.T."/>
            <person name="Entian K.-D."/>
            <person name="Errington J."/>
            <person name="Fabret C."/>
            <person name="Ferrari E."/>
            <person name="Foulger D."/>
            <person name="Fritz C."/>
            <person name="Fujita M."/>
            <person name="Fujita Y."/>
            <person name="Fuma S."/>
            <person name="Galizzi A."/>
            <person name="Galleron N."/>
            <person name="Ghim S.-Y."/>
            <person name="Glaser P."/>
            <person name="Goffeau A."/>
            <person name="Golightly E.J."/>
            <person name="Grandi G."/>
            <person name="Guiseppi G."/>
            <person name="Guy B.J."/>
            <person name="Haga K."/>
            <person name="Haiech J."/>
            <person name="Harwood C.R."/>
            <person name="Henaut A."/>
            <person name="Hilbert H."/>
            <person name="Holsappel S."/>
            <person name="Hosono S."/>
            <person name="Hullo M.-F."/>
            <person name="Itaya M."/>
            <person name="Jones L.-M."/>
            <person name="Joris B."/>
            <person name="Karamata D."/>
            <person name="Kasahara Y."/>
            <person name="Klaerr-Blanchard M."/>
            <person name="Klein C."/>
            <person name="Kobayashi Y."/>
            <person name="Koetter P."/>
            <person name="Koningstein G."/>
            <person name="Krogh S."/>
            <person name="Kumano M."/>
            <person name="Kurita K."/>
            <person name="Lapidus A."/>
            <person name="Lardinois S."/>
            <person name="Lauber J."/>
            <person name="Lazarevic V."/>
            <person name="Lee S.-M."/>
            <person name="Levine A."/>
            <person name="Liu H."/>
            <person name="Masuda S."/>
            <person name="Mauel C."/>
            <person name="Medigue C."/>
            <person name="Medina N."/>
            <person name="Mellado R.P."/>
            <person name="Mizuno M."/>
            <person name="Moestl D."/>
            <person name="Nakai S."/>
            <person name="Noback M."/>
            <person name="Noone D."/>
            <person name="O'Reilly M."/>
            <person name="Ogawa K."/>
            <person name="Ogiwara A."/>
            <person name="Oudega B."/>
            <person name="Park S.-H."/>
            <person name="Parro V."/>
            <person name="Pohl T.M."/>
            <person name="Portetelle D."/>
            <person name="Porwollik S."/>
            <person name="Prescott A.M."/>
            <person name="Presecan E."/>
            <person name="Pujic P."/>
            <person name="Purnelle B."/>
            <person name="Rapoport G."/>
            <person name="Rey M."/>
            <person name="Reynolds S."/>
            <person name="Rieger M."/>
            <person name="Rivolta C."/>
            <person name="Rocha E."/>
            <person name="Roche B."/>
            <person name="Rose M."/>
            <person name="Sadaie Y."/>
            <person name="Sato T."/>
            <person name="Scanlan E."/>
            <person name="Schleich S."/>
            <person name="Schroeter R."/>
            <person name="Scoffone F."/>
            <person name="Sekiguchi J."/>
            <person name="Sekowska A."/>
            <person name="Seror S.J."/>
            <person name="Serror P."/>
            <person name="Shin B.-S."/>
            <person name="Soldo B."/>
            <person name="Sorokin A."/>
            <person name="Tacconi E."/>
            <person name="Takagi T."/>
            <person name="Takahashi H."/>
            <person name="Takemaru K."/>
            <person name="Takeuchi M."/>
            <person name="Tamakoshi A."/>
            <person name="Tanaka T."/>
            <person name="Terpstra P."/>
            <person name="Tognoni A."/>
            <person name="Tosato V."/>
            <person name="Uchiyama S."/>
            <person name="Vandenbol M."/>
            <person name="Vannier F."/>
            <person name="Vassarotti A."/>
            <person name="Viari A."/>
            <person name="Wambutt R."/>
            <person name="Wedler E."/>
            <person name="Wedler H."/>
            <person name="Weitzenegger T."/>
            <person name="Winters P."/>
            <person name="Wipat A."/>
            <person name="Yamamoto H."/>
            <person name="Yamane K."/>
            <person name="Yasumoto K."/>
            <person name="Yata K."/>
            <person name="Yoshida K."/>
            <person name="Yoshikawa H.-F."/>
            <person name="Zumstein E."/>
            <person name="Yoshikawa H."/>
            <person name="Danchin A."/>
        </authorList>
    </citation>
    <scope>NUCLEOTIDE SEQUENCE [LARGE SCALE GENOMIC DNA]</scope>
    <source>
        <strain>168</strain>
    </source>
</reference>
<keyword id="KW-1003">Cell membrane</keyword>
<keyword id="KW-0472">Membrane</keyword>
<keyword id="KW-1185">Reference proteome</keyword>
<keyword id="KW-0812">Transmembrane</keyword>
<keyword id="KW-1133">Transmembrane helix</keyword>
<proteinExistence type="inferred from homology"/>